<comment type="subcellular location">
    <subcellularLocation>
        <location evidence="2">Cytoplasm</location>
    </subcellularLocation>
    <subcellularLocation>
        <location evidence="2">Nucleus</location>
    </subcellularLocation>
</comment>
<comment type="miscellaneous">
    <text evidence="3">Present with 7620 molecules/cell in log phase SD medium.</text>
</comment>
<proteinExistence type="evidence at protein level"/>
<dbReference type="EMBL" id="Z72604">
    <property type="protein sequence ID" value="CAA96787.1"/>
    <property type="molecule type" value="Genomic_DNA"/>
</dbReference>
<dbReference type="EMBL" id="AY558581">
    <property type="protein sequence ID" value="AAS56907.1"/>
    <property type="molecule type" value="Genomic_DNA"/>
</dbReference>
<dbReference type="EMBL" id="BK006941">
    <property type="protein sequence ID" value="DAA08023.1"/>
    <property type="molecule type" value="Genomic_DNA"/>
</dbReference>
<dbReference type="PIR" id="S64089">
    <property type="entry name" value="S64089"/>
</dbReference>
<dbReference type="RefSeq" id="NP_011433.3">
    <property type="nucleotide sequence ID" value="NM_001180947.3"/>
</dbReference>
<dbReference type="PDB" id="6K6L">
    <property type="method" value="X-ray"/>
    <property type="resolution" value="1.77 A"/>
    <property type="chains" value="A/B=1-279"/>
</dbReference>
<dbReference type="PDBsum" id="6K6L"/>
<dbReference type="SMR" id="P53155"/>
<dbReference type="BioGRID" id="33168">
    <property type="interactions" value="32"/>
</dbReference>
<dbReference type="FunCoup" id="P53155">
    <property type="interactions" value="330"/>
</dbReference>
<dbReference type="IntAct" id="P53155">
    <property type="interactions" value="6"/>
</dbReference>
<dbReference type="MINT" id="P53155"/>
<dbReference type="STRING" id="4932.YGL082W"/>
<dbReference type="iPTMnet" id="P53155"/>
<dbReference type="PaxDb" id="4932-YGL082W"/>
<dbReference type="PeptideAtlas" id="P53155"/>
<dbReference type="TopDownProteomics" id="P53155"/>
<dbReference type="EnsemblFungi" id="YGL082W_mRNA">
    <property type="protein sequence ID" value="YGL082W"/>
    <property type="gene ID" value="YGL082W"/>
</dbReference>
<dbReference type="GeneID" id="852798"/>
<dbReference type="KEGG" id="sce:YGL082W"/>
<dbReference type="AGR" id="SGD:S000003050"/>
<dbReference type="SGD" id="S000003050">
    <property type="gene designation" value="YGL082W"/>
</dbReference>
<dbReference type="VEuPathDB" id="FungiDB:YGL082W"/>
<dbReference type="eggNOG" id="KOG2427">
    <property type="taxonomic scope" value="Eukaryota"/>
</dbReference>
<dbReference type="GeneTree" id="ENSGT00390000016607"/>
<dbReference type="HOGENOM" id="CLU_022566_0_0_1"/>
<dbReference type="InParanoid" id="P53155"/>
<dbReference type="OMA" id="GVEMSIF"/>
<dbReference type="OrthoDB" id="10261212at2759"/>
<dbReference type="BioCyc" id="YEAST:G3O-30583-MONOMER"/>
<dbReference type="BioGRID-ORCS" id="852798">
    <property type="hits" value="0 hits in 10 CRISPR screens"/>
</dbReference>
<dbReference type="CD-CODE" id="67785C55">
    <property type="entry name" value="Hypersomatic shock foci"/>
</dbReference>
<dbReference type="PRO" id="PR:P53155"/>
<dbReference type="Proteomes" id="UP000002311">
    <property type="component" value="Chromosome VII"/>
</dbReference>
<dbReference type="RNAct" id="P53155">
    <property type="molecule type" value="protein"/>
</dbReference>
<dbReference type="GO" id="GO:0071944">
    <property type="term" value="C:cell periphery"/>
    <property type="evidence" value="ECO:0007005"/>
    <property type="project" value="SGD"/>
</dbReference>
<dbReference type="GO" id="GO:0005737">
    <property type="term" value="C:cytoplasm"/>
    <property type="evidence" value="ECO:0007005"/>
    <property type="project" value="SGD"/>
</dbReference>
<dbReference type="GO" id="GO:0005634">
    <property type="term" value="C:nucleus"/>
    <property type="evidence" value="ECO:0007005"/>
    <property type="project" value="SGD"/>
</dbReference>
<dbReference type="GO" id="GO:0005886">
    <property type="term" value="C:plasma membrane"/>
    <property type="evidence" value="ECO:0000314"/>
    <property type="project" value="SGD"/>
</dbReference>
<dbReference type="GO" id="GO:0016807">
    <property type="term" value="F:cysteine-type carboxypeptidase activity"/>
    <property type="evidence" value="ECO:0000318"/>
    <property type="project" value="GO_Central"/>
</dbReference>
<dbReference type="GO" id="GO:0004843">
    <property type="term" value="F:cysteine-type deubiquitinase activity"/>
    <property type="evidence" value="ECO:0007669"/>
    <property type="project" value="InterPro"/>
</dbReference>
<dbReference type="GO" id="GO:1990380">
    <property type="term" value="F:K48-linked deubiquitinase activity"/>
    <property type="evidence" value="ECO:0000318"/>
    <property type="project" value="GO_Central"/>
</dbReference>
<dbReference type="InterPro" id="IPR007518">
    <property type="entry name" value="MINDY"/>
</dbReference>
<dbReference type="InterPro" id="IPR033979">
    <property type="entry name" value="MINDY_domain"/>
</dbReference>
<dbReference type="PANTHER" id="PTHR18063">
    <property type="entry name" value="NF-E2 INDUCIBLE PROTEIN"/>
    <property type="match status" value="1"/>
</dbReference>
<dbReference type="PANTHER" id="PTHR18063:SF6">
    <property type="entry name" value="UBIQUITIN CARBOXYL-TERMINAL HYDROLASE"/>
    <property type="match status" value="1"/>
</dbReference>
<dbReference type="Pfam" id="PF04424">
    <property type="entry name" value="MINDY_DUB"/>
    <property type="match status" value="1"/>
</dbReference>
<sequence>MDVTFLTKNVQINGTQFKILLQNGQGECALIALANVLLISPAHARYAQEISRLVRGKETVTLNELVQTLADMGVQNPNGTDVDKQQLLQILPQLYSGLNINPEFNGSFEDGVEMSIFRLYNVGIVHGWIIDGDNDPNSYEHVSKYSYMGAQKVLVQSYEIQKNNAQFENSEQIQSDAPYLKSFLARSATQLTEYGLTHLREILVERSYAVLFRNDHFCTLYKNNGELFTLVTDPTYRNRKDINWQSLKSVNGSQDSYYTGNFIPTSLERTETTATGQNESYISNPFSDQNTGHVTSNQVNSGASGVQQIEDDEELARRLQEQEDMRAANNMQNGYANNGRNHQRERFERPEKNSKKNKFLPFNGSNKEKKRDKLKKNCVIM</sequence>
<reference key="1">
    <citation type="journal article" date="1997" name="Yeast">
        <title>Sequence analysis of 203 kilobases from Saccharomyces cerevisiae chromosome VII.</title>
        <authorList>
            <person name="Rieger M."/>
            <person name="Brueckner M."/>
            <person name="Schaefer M."/>
            <person name="Mueller-Auer S."/>
        </authorList>
    </citation>
    <scope>NUCLEOTIDE SEQUENCE [GENOMIC DNA]</scope>
    <source>
        <strain>ATCC 204508 / S288c</strain>
    </source>
</reference>
<reference key="2">
    <citation type="journal article" date="1997" name="Nature">
        <title>The nucleotide sequence of Saccharomyces cerevisiae chromosome VII.</title>
        <authorList>
            <person name="Tettelin H."/>
            <person name="Agostoni-Carbone M.L."/>
            <person name="Albermann K."/>
            <person name="Albers M."/>
            <person name="Arroyo J."/>
            <person name="Backes U."/>
            <person name="Barreiros T."/>
            <person name="Bertani I."/>
            <person name="Bjourson A.J."/>
            <person name="Brueckner M."/>
            <person name="Bruschi C.V."/>
            <person name="Carignani G."/>
            <person name="Castagnoli L."/>
            <person name="Cerdan E."/>
            <person name="Clemente M.L."/>
            <person name="Coblenz A."/>
            <person name="Coglievina M."/>
            <person name="Coissac E."/>
            <person name="Defoor E."/>
            <person name="Del Bino S."/>
            <person name="Delius H."/>
            <person name="Delneri D."/>
            <person name="de Wergifosse P."/>
            <person name="Dujon B."/>
            <person name="Durand P."/>
            <person name="Entian K.-D."/>
            <person name="Eraso P."/>
            <person name="Escribano V."/>
            <person name="Fabiani L."/>
            <person name="Fartmann B."/>
            <person name="Feroli F."/>
            <person name="Feuermann M."/>
            <person name="Frontali L."/>
            <person name="Garcia-Gonzalez M."/>
            <person name="Garcia-Saez M.I."/>
            <person name="Goffeau A."/>
            <person name="Guerreiro P."/>
            <person name="Hani J."/>
            <person name="Hansen M."/>
            <person name="Hebling U."/>
            <person name="Hernandez K."/>
            <person name="Heumann K."/>
            <person name="Hilger F."/>
            <person name="Hofmann B."/>
            <person name="Indge K.J."/>
            <person name="James C.M."/>
            <person name="Klima R."/>
            <person name="Koetter P."/>
            <person name="Kramer B."/>
            <person name="Kramer W."/>
            <person name="Lauquin G."/>
            <person name="Leuther H."/>
            <person name="Louis E.J."/>
            <person name="Maillier E."/>
            <person name="Marconi A."/>
            <person name="Martegani E."/>
            <person name="Mazon M.J."/>
            <person name="Mazzoni C."/>
            <person name="McReynolds A.D.K."/>
            <person name="Melchioretto P."/>
            <person name="Mewes H.-W."/>
            <person name="Minenkova O."/>
            <person name="Mueller-Auer S."/>
            <person name="Nawrocki A."/>
            <person name="Netter P."/>
            <person name="Neu R."/>
            <person name="Nombela C."/>
            <person name="Oliver S.G."/>
            <person name="Panzeri L."/>
            <person name="Paoluzi S."/>
            <person name="Plevani P."/>
            <person name="Portetelle D."/>
            <person name="Portillo F."/>
            <person name="Potier S."/>
            <person name="Purnelle B."/>
            <person name="Rieger M."/>
            <person name="Riles L."/>
            <person name="Rinaldi T."/>
            <person name="Robben J."/>
            <person name="Rodrigues-Pousada C."/>
            <person name="Rodriguez-Belmonte E."/>
            <person name="Rodriguez-Torres A.M."/>
            <person name="Rose M."/>
            <person name="Ruzzi M."/>
            <person name="Saliola M."/>
            <person name="Sanchez-Perez M."/>
            <person name="Schaefer B."/>
            <person name="Schaefer M."/>
            <person name="Scharfe M."/>
            <person name="Schmidheini T."/>
            <person name="Schreer A."/>
            <person name="Skala J."/>
            <person name="Souciet J.-L."/>
            <person name="Steensma H.Y."/>
            <person name="Talla E."/>
            <person name="Thierry A."/>
            <person name="Vandenbol M."/>
            <person name="van der Aart Q.J.M."/>
            <person name="Van Dyck L."/>
            <person name="Vanoni M."/>
            <person name="Verhasselt P."/>
            <person name="Voet M."/>
            <person name="Volckaert G."/>
            <person name="Wambutt R."/>
            <person name="Watson M.D."/>
            <person name="Weber N."/>
            <person name="Wedler E."/>
            <person name="Wedler H."/>
            <person name="Wipfli P."/>
            <person name="Wolf K."/>
            <person name="Wright L.F."/>
            <person name="Zaccaria P."/>
            <person name="Zimmermann M."/>
            <person name="Zollner A."/>
            <person name="Kleine K."/>
        </authorList>
    </citation>
    <scope>NUCLEOTIDE SEQUENCE [LARGE SCALE GENOMIC DNA]</scope>
    <source>
        <strain>ATCC 204508 / S288c</strain>
    </source>
</reference>
<reference key="3">
    <citation type="journal article" date="2014" name="G3 (Bethesda)">
        <title>The reference genome sequence of Saccharomyces cerevisiae: Then and now.</title>
        <authorList>
            <person name="Engel S.R."/>
            <person name="Dietrich F.S."/>
            <person name="Fisk D.G."/>
            <person name="Binkley G."/>
            <person name="Balakrishnan R."/>
            <person name="Costanzo M.C."/>
            <person name="Dwight S.S."/>
            <person name="Hitz B.C."/>
            <person name="Karra K."/>
            <person name="Nash R.S."/>
            <person name="Weng S."/>
            <person name="Wong E.D."/>
            <person name="Lloyd P."/>
            <person name="Skrzypek M.S."/>
            <person name="Miyasato S.R."/>
            <person name="Simison M."/>
            <person name="Cherry J.M."/>
        </authorList>
    </citation>
    <scope>GENOME REANNOTATION</scope>
    <source>
        <strain>ATCC 204508 / S288c</strain>
    </source>
</reference>
<reference key="4">
    <citation type="journal article" date="2007" name="Genome Res.">
        <title>Approaching a complete repository of sequence-verified protein-encoding clones for Saccharomyces cerevisiae.</title>
        <authorList>
            <person name="Hu Y."/>
            <person name="Rolfs A."/>
            <person name="Bhullar B."/>
            <person name="Murthy T.V.S."/>
            <person name="Zhu C."/>
            <person name="Berger M.F."/>
            <person name="Camargo A.A."/>
            <person name="Kelley F."/>
            <person name="McCarron S."/>
            <person name="Jepson D."/>
            <person name="Richardson A."/>
            <person name="Raphael J."/>
            <person name="Moreira D."/>
            <person name="Taycher E."/>
            <person name="Zuo D."/>
            <person name="Mohr S."/>
            <person name="Kane M.F."/>
            <person name="Williamson J."/>
            <person name="Simpson A.J.G."/>
            <person name="Bulyk M.L."/>
            <person name="Harlow E."/>
            <person name="Marsischky G."/>
            <person name="Kolodner R.D."/>
            <person name="LaBaer J."/>
        </authorList>
    </citation>
    <scope>NUCLEOTIDE SEQUENCE [GENOMIC DNA]</scope>
    <source>
        <strain>ATCC 204508 / S288c</strain>
    </source>
</reference>
<reference key="5">
    <citation type="journal article" date="2003" name="Nature">
        <title>Global analysis of protein localization in budding yeast.</title>
        <authorList>
            <person name="Huh W.-K."/>
            <person name="Falvo J.V."/>
            <person name="Gerke L.C."/>
            <person name="Carroll A.S."/>
            <person name="Howson R.W."/>
            <person name="Weissman J.S."/>
            <person name="O'Shea E.K."/>
        </authorList>
    </citation>
    <scope>SUBCELLULAR LOCATION [LARGE SCALE ANALYSIS]</scope>
</reference>
<reference key="6">
    <citation type="journal article" date="2003" name="Nature">
        <title>Global analysis of protein expression in yeast.</title>
        <authorList>
            <person name="Ghaemmaghami S."/>
            <person name="Huh W.-K."/>
            <person name="Bower K."/>
            <person name="Howson R.W."/>
            <person name="Belle A."/>
            <person name="Dephoure N."/>
            <person name="O'Shea E.K."/>
            <person name="Weissman J.S."/>
        </authorList>
    </citation>
    <scope>LEVEL OF PROTEIN EXPRESSION [LARGE SCALE ANALYSIS]</scope>
</reference>
<reference key="7">
    <citation type="journal article" date="2008" name="Mol. Cell. Proteomics">
        <title>A multidimensional chromatography technology for in-depth phosphoproteome analysis.</title>
        <authorList>
            <person name="Albuquerque C.P."/>
            <person name="Smolka M.B."/>
            <person name="Payne S.H."/>
            <person name="Bafna V."/>
            <person name="Eng J."/>
            <person name="Zhou H."/>
        </authorList>
    </citation>
    <scope>IDENTIFICATION BY MASS SPECTROMETRY [LARGE SCALE ANALYSIS]</scope>
</reference>
<feature type="chain" id="PRO_0000202757" description="Uncharacterized protein YGL082W">
    <location>
        <begin position="1"/>
        <end position="381"/>
    </location>
</feature>
<feature type="region of interest" description="Disordered" evidence="1">
    <location>
        <begin position="331"/>
        <end position="381"/>
    </location>
</feature>
<feature type="compositionally biased region" description="Polar residues" evidence="1">
    <location>
        <begin position="331"/>
        <end position="340"/>
    </location>
</feature>
<feature type="compositionally biased region" description="Basic and acidic residues" evidence="1">
    <location>
        <begin position="342"/>
        <end position="354"/>
    </location>
</feature>
<feature type="compositionally biased region" description="Basic residues" evidence="1">
    <location>
        <begin position="372"/>
        <end position="381"/>
    </location>
</feature>
<feature type="sequence conflict" description="In Ref. 4; AAS56907." evidence="4" ref="4">
    <original>I</original>
    <variation>T</variation>
    <location>
        <position position="263"/>
    </location>
</feature>
<feature type="strand" evidence="5">
    <location>
        <begin position="7"/>
        <end position="12"/>
    </location>
</feature>
<feature type="strand" evidence="5">
    <location>
        <begin position="15"/>
        <end position="20"/>
    </location>
</feature>
<feature type="helix" evidence="5">
    <location>
        <begin position="29"/>
        <end position="39"/>
    </location>
</feature>
<feature type="helix" evidence="5">
    <location>
        <begin position="41"/>
        <end position="43"/>
    </location>
</feature>
<feature type="turn" evidence="5">
    <location>
        <begin position="44"/>
        <end position="46"/>
    </location>
</feature>
<feature type="helix" evidence="5">
    <location>
        <begin position="48"/>
        <end position="55"/>
    </location>
</feature>
<feature type="helix" evidence="5">
    <location>
        <begin position="63"/>
        <end position="74"/>
    </location>
</feature>
<feature type="helix" evidence="5">
    <location>
        <begin position="87"/>
        <end position="90"/>
    </location>
</feature>
<feature type="helix" evidence="5">
    <location>
        <begin position="93"/>
        <end position="96"/>
    </location>
</feature>
<feature type="helix" evidence="5">
    <location>
        <begin position="112"/>
        <end position="119"/>
    </location>
</feature>
<feature type="strand" evidence="5">
    <location>
        <begin position="123"/>
        <end position="126"/>
    </location>
</feature>
<feature type="turn" evidence="5">
    <location>
        <begin position="132"/>
        <end position="134"/>
    </location>
</feature>
<feature type="helix" evidence="5">
    <location>
        <begin position="136"/>
        <end position="142"/>
    </location>
</feature>
<feature type="helix" evidence="5">
    <location>
        <begin position="147"/>
        <end position="163"/>
    </location>
</feature>
<feature type="helix" evidence="5">
    <location>
        <begin position="170"/>
        <end position="186"/>
    </location>
</feature>
<feature type="helix" evidence="5">
    <location>
        <begin position="193"/>
        <end position="202"/>
    </location>
</feature>
<feature type="strand" evidence="5">
    <location>
        <begin position="208"/>
        <end position="213"/>
    </location>
</feature>
<feature type="strand" evidence="5">
    <location>
        <begin position="216"/>
        <end position="223"/>
    </location>
</feature>
<feature type="strand" evidence="5">
    <location>
        <begin position="226"/>
        <end position="230"/>
    </location>
</feature>
<feature type="helix" evidence="5">
    <location>
        <begin position="234"/>
        <end position="236"/>
    </location>
</feature>
<feature type="strand" evidence="5">
    <location>
        <begin position="244"/>
        <end position="246"/>
    </location>
</feature>
<feature type="strand" evidence="5">
    <location>
        <begin position="250"/>
        <end position="252"/>
    </location>
</feature>
<accession>P53155</accession>
<accession>D6VU62</accession>
<accession>Q6Q536</accession>
<protein>
    <recommendedName>
        <fullName>Uncharacterized protein YGL082W</fullName>
    </recommendedName>
</protein>
<evidence type="ECO:0000256" key="1">
    <source>
        <dbReference type="SAM" id="MobiDB-lite"/>
    </source>
</evidence>
<evidence type="ECO:0000269" key="2">
    <source>
    </source>
</evidence>
<evidence type="ECO:0000269" key="3">
    <source>
    </source>
</evidence>
<evidence type="ECO:0000305" key="4"/>
<evidence type="ECO:0007829" key="5">
    <source>
        <dbReference type="PDB" id="6K6L"/>
    </source>
</evidence>
<gene>
    <name type="ordered locus">YGL082W</name>
</gene>
<organism>
    <name type="scientific">Saccharomyces cerevisiae (strain ATCC 204508 / S288c)</name>
    <name type="common">Baker's yeast</name>
    <dbReference type="NCBI Taxonomy" id="559292"/>
    <lineage>
        <taxon>Eukaryota</taxon>
        <taxon>Fungi</taxon>
        <taxon>Dikarya</taxon>
        <taxon>Ascomycota</taxon>
        <taxon>Saccharomycotina</taxon>
        <taxon>Saccharomycetes</taxon>
        <taxon>Saccharomycetales</taxon>
        <taxon>Saccharomycetaceae</taxon>
        <taxon>Saccharomyces</taxon>
    </lineage>
</organism>
<name>YGI2_YEAST</name>
<keyword id="KW-0002">3D-structure</keyword>
<keyword id="KW-0963">Cytoplasm</keyword>
<keyword id="KW-0539">Nucleus</keyword>
<keyword id="KW-1185">Reference proteome</keyword>